<evidence type="ECO:0000255" key="1">
    <source>
        <dbReference type="HAMAP-Rule" id="MF_00298"/>
    </source>
</evidence>
<reference key="1">
    <citation type="journal article" date="2002" name="Nat. Biotechnol.">
        <title>Genome sequence of the dissimilatory metal ion-reducing bacterium Shewanella oneidensis.</title>
        <authorList>
            <person name="Heidelberg J.F."/>
            <person name="Paulsen I.T."/>
            <person name="Nelson K.E."/>
            <person name="Gaidos E.J."/>
            <person name="Nelson W.C."/>
            <person name="Read T.D."/>
            <person name="Eisen J.A."/>
            <person name="Seshadri R."/>
            <person name="Ward N.L."/>
            <person name="Methe B.A."/>
            <person name="Clayton R.A."/>
            <person name="Meyer T."/>
            <person name="Tsapin A."/>
            <person name="Scott J."/>
            <person name="Beanan M.J."/>
            <person name="Brinkac L.M."/>
            <person name="Daugherty S.C."/>
            <person name="DeBoy R.T."/>
            <person name="Dodson R.J."/>
            <person name="Durkin A.S."/>
            <person name="Haft D.H."/>
            <person name="Kolonay J.F."/>
            <person name="Madupu R."/>
            <person name="Peterson J.D."/>
            <person name="Umayam L.A."/>
            <person name="White O."/>
            <person name="Wolf A.M."/>
            <person name="Vamathevan J.J."/>
            <person name="Weidman J.F."/>
            <person name="Impraim M."/>
            <person name="Lee K."/>
            <person name="Berry K.J."/>
            <person name="Lee C."/>
            <person name="Mueller J."/>
            <person name="Khouri H.M."/>
            <person name="Gill J."/>
            <person name="Utterback T.R."/>
            <person name="McDonald L.A."/>
            <person name="Feldblyum T.V."/>
            <person name="Smith H.O."/>
            <person name="Venter J.C."/>
            <person name="Nealson K.H."/>
            <person name="Fraser C.M."/>
        </authorList>
    </citation>
    <scope>NUCLEOTIDE SEQUENCE [LARGE SCALE GENOMIC DNA]</scope>
    <source>
        <strain>ATCC 700550 / JCM 31522 / CIP 106686 / LMG 19005 / NCIMB 14063 / MR-1</strain>
    </source>
</reference>
<proteinExistence type="inferred from homology"/>
<gene>
    <name evidence="1" type="primary">rppH</name>
    <name evidence="1" type="synonym">nudH</name>
    <name type="ordered locus">SO_1331</name>
</gene>
<keyword id="KW-0378">Hydrolase</keyword>
<keyword id="KW-1185">Reference proteome</keyword>
<accession>Q8EH98</accession>
<protein>
    <recommendedName>
        <fullName evidence="1">RNA pyrophosphohydrolase</fullName>
        <ecNumber evidence="1">3.6.1.-</ecNumber>
    </recommendedName>
    <alternativeName>
        <fullName evidence="1">(Di)nucleoside polyphosphate hydrolase</fullName>
    </alternativeName>
</protein>
<name>RPPH_SHEON</name>
<organism>
    <name type="scientific">Shewanella oneidensis (strain ATCC 700550 / JCM 31522 / CIP 106686 / LMG 19005 / NCIMB 14063 / MR-1)</name>
    <dbReference type="NCBI Taxonomy" id="211586"/>
    <lineage>
        <taxon>Bacteria</taxon>
        <taxon>Pseudomonadati</taxon>
        <taxon>Pseudomonadota</taxon>
        <taxon>Gammaproteobacteria</taxon>
        <taxon>Alteromonadales</taxon>
        <taxon>Shewanellaceae</taxon>
        <taxon>Shewanella</taxon>
    </lineage>
</organism>
<dbReference type="EC" id="3.6.1.-" evidence="1"/>
<dbReference type="EMBL" id="AE014299">
    <property type="protein sequence ID" value="AAN54396.1"/>
    <property type="molecule type" value="Genomic_DNA"/>
</dbReference>
<dbReference type="RefSeq" id="NP_716951.1">
    <property type="nucleotide sequence ID" value="NC_004347.2"/>
</dbReference>
<dbReference type="RefSeq" id="WP_011071540.1">
    <property type="nucleotide sequence ID" value="NZ_CP053946.1"/>
</dbReference>
<dbReference type="SMR" id="Q8EH98"/>
<dbReference type="STRING" id="211586.SO_1331"/>
<dbReference type="PaxDb" id="211586-SO_1331"/>
<dbReference type="KEGG" id="son:SO_1331"/>
<dbReference type="PATRIC" id="fig|211586.12.peg.1281"/>
<dbReference type="eggNOG" id="COG0494">
    <property type="taxonomic scope" value="Bacteria"/>
</dbReference>
<dbReference type="HOGENOM" id="CLU_087195_3_1_6"/>
<dbReference type="OrthoDB" id="9816040at2"/>
<dbReference type="PhylomeDB" id="Q8EH98"/>
<dbReference type="BioCyc" id="SONE211586:G1GMP-1229-MONOMER"/>
<dbReference type="Proteomes" id="UP000008186">
    <property type="component" value="Chromosome"/>
</dbReference>
<dbReference type="GO" id="GO:0005737">
    <property type="term" value="C:cytoplasm"/>
    <property type="evidence" value="ECO:0000318"/>
    <property type="project" value="GO_Central"/>
</dbReference>
<dbReference type="GO" id="GO:0034353">
    <property type="term" value="F:mRNA 5'-diphosphatase activity"/>
    <property type="evidence" value="ECO:0000318"/>
    <property type="project" value="GO_Central"/>
</dbReference>
<dbReference type="GO" id="GO:0006402">
    <property type="term" value="P:mRNA catabolic process"/>
    <property type="evidence" value="ECO:0000318"/>
    <property type="project" value="GO_Central"/>
</dbReference>
<dbReference type="CDD" id="cd03671">
    <property type="entry name" value="NUDIX_Ap4A_hydrolase_plant_like"/>
    <property type="match status" value="1"/>
</dbReference>
<dbReference type="FunFam" id="3.90.79.10:FF:000001">
    <property type="entry name" value="RNA pyrophosphohydrolase"/>
    <property type="match status" value="1"/>
</dbReference>
<dbReference type="Gene3D" id="3.90.79.10">
    <property type="entry name" value="Nucleoside Triphosphate Pyrophosphohydrolase"/>
    <property type="match status" value="1"/>
</dbReference>
<dbReference type="HAMAP" id="MF_00298">
    <property type="entry name" value="Nudix_RppH"/>
    <property type="match status" value="1"/>
</dbReference>
<dbReference type="InterPro" id="IPR020476">
    <property type="entry name" value="Nudix_hydrolase"/>
</dbReference>
<dbReference type="InterPro" id="IPR015797">
    <property type="entry name" value="NUDIX_hydrolase-like_dom_sf"/>
</dbReference>
<dbReference type="InterPro" id="IPR020084">
    <property type="entry name" value="NUDIX_hydrolase_CS"/>
</dbReference>
<dbReference type="InterPro" id="IPR000086">
    <property type="entry name" value="NUDIX_hydrolase_dom"/>
</dbReference>
<dbReference type="InterPro" id="IPR022927">
    <property type="entry name" value="RppH"/>
</dbReference>
<dbReference type="NCBIfam" id="NF001934">
    <property type="entry name" value="PRK00714.1-1"/>
    <property type="match status" value="1"/>
</dbReference>
<dbReference type="NCBIfam" id="NF001937">
    <property type="entry name" value="PRK00714.1-4"/>
    <property type="match status" value="1"/>
</dbReference>
<dbReference type="NCBIfam" id="NF001938">
    <property type="entry name" value="PRK00714.1-5"/>
    <property type="match status" value="1"/>
</dbReference>
<dbReference type="PANTHER" id="PTHR23114">
    <property type="entry name" value="M7GPPPN-MRNA HYDROLASE"/>
    <property type="match status" value="1"/>
</dbReference>
<dbReference type="PANTHER" id="PTHR23114:SF17">
    <property type="entry name" value="M7GPPPN-MRNA HYDROLASE"/>
    <property type="match status" value="1"/>
</dbReference>
<dbReference type="Pfam" id="PF00293">
    <property type="entry name" value="NUDIX"/>
    <property type="match status" value="1"/>
</dbReference>
<dbReference type="PRINTS" id="PR00502">
    <property type="entry name" value="NUDIXFAMILY"/>
</dbReference>
<dbReference type="SUPFAM" id="SSF55811">
    <property type="entry name" value="Nudix"/>
    <property type="match status" value="1"/>
</dbReference>
<dbReference type="PROSITE" id="PS51462">
    <property type="entry name" value="NUDIX"/>
    <property type="match status" value="1"/>
</dbReference>
<dbReference type="PROSITE" id="PS00893">
    <property type="entry name" value="NUDIX_BOX"/>
    <property type="match status" value="1"/>
</dbReference>
<feature type="chain" id="PRO_0000057028" description="RNA pyrophosphohydrolase">
    <location>
        <begin position="1"/>
        <end position="174"/>
    </location>
</feature>
<feature type="domain" description="Nudix hydrolase" evidence="1">
    <location>
        <begin position="6"/>
        <end position="149"/>
    </location>
</feature>
<feature type="short sequence motif" description="Nudix box">
    <location>
        <begin position="38"/>
        <end position="59"/>
    </location>
</feature>
<comment type="function">
    <text evidence="1">Accelerates the degradation of transcripts by removing pyrophosphate from the 5'-end of triphosphorylated RNA, leading to a more labile monophosphorylated state that can stimulate subsequent ribonuclease cleavage.</text>
</comment>
<comment type="cofactor">
    <cofactor evidence="1">
        <name>a divalent metal cation</name>
        <dbReference type="ChEBI" id="CHEBI:60240"/>
    </cofactor>
</comment>
<comment type="similarity">
    <text evidence="1">Belongs to the Nudix hydrolase family. RppH subfamily.</text>
</comment>
<sequence length="174" mass="20538">MIDSDGFRANVGIIICNRYGQVMWARRFGQHSWQFPQGGVDDGESAEEAMYRELYEEVGLRPEHVTVLTSTRSWLRYRLPKRLVRQDSKPVCIGQKQKWFLLQLKSQDSAINLSSSGHPEFDDWRWVSYWYPVRQVVSFKRDVYRKVMKEFAVTALSFQTQEIPKKRVRQKTTG</sequence>